<dbReference type="EMBL" id="AM229011">
    <property type="protein sequence ID" value="CAJ76135.1"/>
    <property type="molecule type" value="mRNA"/>
</dbReference>
<dbReference type="GO" id="GO:0005576">
    <property type="term" value="C:extracellular region"/>
    <property type="evidence" value="ECO:0007669"/>
    <property type="project" value="UniProtKB-SubCell"/>
</dbReference>
<dbReference type="GO" id="GO:0042742">
    <property type="term" value="P:defense response to bacterium"/>
    <property type="evidence" value="ECO:0007669"/>
    <property type="project" value="UniProtKB-KW"/>
</dbReference>
<dbReference type="InterPro" id="IPR004275">
    <property type="entry name" value="Frog_antimicrobial_propeptide"/>
</dbReference>
<dbReference type="InterPro" id="IPR016322">
    <property type="entry name" value="FSAP"/>
</dbReference>
<dbReference type="Pfam" id="PF03032">
    <property type="entry name" value="FSAP_sig_propep"/>
    <property type="match status" value="1"/>
</dbReference>
<dbReference type="PIRSF" id="PIRSF001822">
    <property type="entry name" value="Dermaseptin_precursor"/>
    <property type="match status" value="1"/>
</dbReference>
<gene>
    <name evidence="8" type="primary">psn-8</name>
</gene>
<reference evidence="7 8" key="1">
    <citation type="journal article" date="2006" name="Peptides">
        <title>Elements of the granular gland peptidome and transcriptome persist in air-dried skin of the South American orange-legged leaf frog, Phyllomedusa hypocondrialis.</title>
        <authorList>
            <person name="Chen T."/>
            <person name="Zhou M."/>
            <person name="Gagliardo R."/>
            <person name="Walker B."/>
            <person name="Shaw C."/>
        </authorList>
    </citation>
    <scope>NUCLEOTIDE SEQUENCE [MRNA]</scope>
    <scope>PROTEIN SEQUENCE OF 47-65</scope>
    <scope>SUBCELLULAR LOCATION</scope>
    <scope>TISSUE SPECIFICITY</scope>
    <scope>MASS SPECTROMETRY</scope>
    <scope>AMIDATION AT PHE-65</scope>
    <source>
        <tissue evidence="8">Skin</tissue>
        <tissue evidence="4">Skin secretion</tissue>
    </source>
</reference>
<reference key="2">
    <citation type="journal article" date="2008" name="Peptides">
        <title>A consistent nomenclature of antimicrobial peptides isolated from frogs of the subfamily Phyllomedusinae.</title>
        <authorList>
            <person name="Amiche M."/>
            <person name="Ladram A."/>
            <person name="Nicolas P."/>
        </authorList>
    </citation>
    <scope>NOMENCLATURE</scope>
</reference>
<protein>
    <recommendedName>
        <fullName evidence="6">Phylloseptin-H6</fullName>
        <shortName evidence="6">PLS-H6</shortName>
    </recommendedName>
    <alternativeName>
        <fullName evidence="5">Phylloseptin-8</fullName>
        <shortName evidence="2">PS-8</shortName>
    </alternativeName>
</protein>
<accession>Q0VZ41</accession>
<proteinExistence type="evidence at protein level"/>
<comment type="function">
    <text evidence="1">Has antimicrobial activity.</text>
</comment>
<comment type="subcellular location">
    <subcellularLocation>
        <location evidence="4">Secreted</location>
    </subcellularLocation>
</comment>
<comment type="tissue specificity">
    <text evidence="4">Expressed by the skin glands.</text>
</comment>
<comment type="mass spectrometry"/>
<comment type="similarity">
    <text evidence="3">Belongs to the frog skin active peptide (FSAP) family. Phylloseptin subfamily.</text>
</comment>
<comment type="online information" name="The antimicrobial peptide database">
    <link uri="https://wangapd3.com/database/query_output.php?ID=00954"/>
</comment>
<keyword id="KW-0027">Amidation</keyword>
<keyword id="KW-0878">Amphibian defense peptide</keyword>
<keyword id="KW-0044">Antibiotic</keyword>
<keyword id="KW-0929">Antimicrobial</keyword>
<keyword id="KW-0165">Cleavage on pair of basic residues</keyword>
<keyword id="KW-0903">Direct protein sequencing</keyword>
<keyword id="KW-0964">Secreted</keyword>
<keyword id="KW-0732">Signal</keyword>
<organism>
    <name type="scientific">Pithecopus hypochondrialis</name>
    <name type="common">Orange-legged leaf frog</name>
    <name type="synonym">Phyllomedusa hypochondrialis</name>
    <dbReference type="NCBI Taxonomy" id="317381"/>
    <lineage>
        <taxon>Eukaryota</taxon>
        <taxon>Metazoa</taxon>
        <taxon>Chordata</taxon>
        <taxon>Craniata</taxon>
        <taxon>Vertebrata</taxon>
        <taxon>Euteleostomi</taxon>
        <taxon>Amphibia</taxon>
        <taxon>Batrachia</taxon>
        <taxon>Anura</taxon>
        <taxon>Neobatrachia</taxon>
        <taxon>Hyloidea</taxon>
        <taxon>Hylidae</taxon>
        <taxon>Phyllomedusinae</taxon>
        <taxon>Pithecopus</taxon>
    </lineage>
</organism>
<evidence type="ECO:0000250" key="1">
    <source>
        <dbReference type="UniProtKB" id="P84572"/>
    </source>
</evidence>
<evidence type="ECO:0000250" key="2">
    <source>
        <dbReference type="UniProtKB" id="P85883"/>
    </source>
</evidence>
<evidence type="ECO:0000255" key="3"/>
<evidence type="ECO:0000269" key="4">
    <source>
    </source>
</evidence>
<evidence type="ECO:0000303" key="5">
    <source>
    </source>
</evidence>
<evidence type="ECO:0000303" key="6">
    <source>
    </source>
</evidence>
<evidence type="ECO:0000305" key="7"/>
<evidence type="ECO:0000312" key="8">
    <source>
        <dbReference type="EMBL" id="CAJ76135.1"/>
    </source>
</evidence>
<feature type="signal peptide" evidence="3">
    <location>
        <begin position="1"/>
        <end position="22"/>
    </location>
</feature>
<feature type="propeptide" id="PRO_0000372697" evidence="4">
    <location>
        <begin position="23"/>
        <end position="44"/>
    </location>
</feature>
<feature type="peptide" id="PRO_0000372698" description="Phylloseptin-H6" evidence="4">
    <location>
        <begin position="47"/>
        <end position="65"/>
    </location>
</feature>
<feature type="modified residue" description="Phenylalanine amide" evidence="4">
    <location>
        <position position="65"/>
    </location>
</feature>
<name>PLS6_PITHY</name>
<sequence>MAFLKKSLFLVLFLGLVSLSICEEEKRETEEEEYNQEDDDKSEEKRFLSLIPTAINAVSALAKHFG</sequence>